<comment type="function">
    <text evidence="1">May be involved in photosynthetic membrane biogenesis.</text>
</comment>
<comment type="similarity">
    <text evidence="1">Belongs to the THF1 family.</text>
</comment>
<reference key="1">
    <citation type="submission" date="2008-02" db="EMBL/GenBank/DDBJ databases">
        <title>Complete sequence of Synechococcus sp. PCC 7002.</title>
        <authorList>
            <person name="Li T."/>
            <person name="Zhao J."/>
            <person name="Zhao C."/>
            <person name="Liu Z."/>
            <person name="Zhao F."/>
            <person name="Marquardt J."/>
            <person name="Nomura C.T."/>
            <person name="Persson S."/>
            <person name="Detter J.C."/>
            <person name="Richardson P.M."/>
            <person name="Lanz C."/>
            <person name="Schuster S.C."/>
            <person name="Wang J."/>
            <person name="Li S."/>
            <person name="Huang X."/>
            <person name="Cai T."/>
            <person name="Yu Z."/>
            <person name="Luo J."/>
            <person name="Zhao J."/>
            <person name="Bryant D.A."/>
        </authorList>
    </citation>
    <scope>NUCLEOTIDE SEQUENCE [LARGE SCALE GENOMIC DNA]</scope>
    <source>
        <strain>ATCC 27264 / PCC 7002 / PR-6</strain>
    </source>
</reference>
<evidence type="ECO:0000255" key="1">
    <source>
        <dbReference type="HAMAP-Rule" id="MF_01843"/>
    </source>
</evidence>
<evidence type="ECO:0000256" key="2">
    <source>
        <dbReference type="SAM" id="MobiDB-lite"/>
    </source>
</evidence>
<feature type="chain" id="PRO_1000188429" description="Protein Thf1">
    <location>
        <begin position="1"/>
        <end position="254"/>
    </location>
</feature>
<feature type="region of interest" description="Disordered" evidence="2">
    <location>
        <begin position="215"/>
        <end position="254"/>
    </location>
</feature>
<feature type="coiled-coil region" evidence="1">
    <location>
        <begin position="182"/>
        <end position="241"/>
    </location>
</feature>
<feature type="compositionally biased region" description="Basic and acidic residues" evidence="2">
    <location>
        <begin position="215"/>
        <end position="228"/>
    </location>
</feature>
<proteinExistence type="inferred from homology"/>
<dbReference type="EMBL" id="CP000951">
    <property type="protein sequence ID" value="ACA98737.1"/>
    <property type="molecule type" value="Genomic_DNA"/>
</dbReference>
<dbReference type="RefSeq" id="WP_012306361.1">
    <property type="nucleotide sequence ID" value="NC_010475.1"/>
</dbReference>
<dbReference type="SMR" id="B1XHY6"/>
<dbReference type="STRING" id="32049.SYNPCC7002_A0732"/>
<dbReference type="KEGG" id="syp:SYNPCC7002_A0732"/>
<dbReference type="eggNOG" id="ENOG502Z86M">
    <property type="taxonomic scope" value="Bacteria"/>
</dbReference>
<dbReference type="HOGENOM" id="CLU_079763_1_0_3"/>
<dbReference type="Proteomes" id="UP000001688">
    <property type="component" value="Chromosome"/>
</dbReference>
<dbReference type="GO" id="GO:0030096">
    <property type="term" value="C:plasma membrane-derived thylakoid photosystem II"/>
    <property type="evidence" value="ECO:0007669"/>
    <property type="project" value="TreeGrafter"/>
</dbReference>
<dbReference type="GO" id="GO:0010207">
    <property type="term" value="P:photosystem II assembly"/>
    <property type="evidence" value="ECO:0007669"/>
    <property type="project" value="InterPro"/>
</dbReference>
<dbReference type="HAMAP" id="MF_01843">
    <property type="entry name" value="Thf1"/>
    <property type="match status" value="1"/>
</dbReference>
<dbReference type="InterPro" id="IPR017499">
    <property type="entry name" value="Thf1"/>
</dbReference>
<dbReference type="NCBIfam" id="TIGR03060">
    <property type="entry name" value="PS_II_psb29"/>
    <property type="match status" value="1"/>
</dbReference>
<dbReference type="PANTHER" id="PTHR34793">
    <property type="entry name" value="PROTEIN THYLAKOID FORMATION 1, CHLOROPLASTIC"/>
    <property type="match status" value="1"/>
</dbReference>
<dbReference type="PANTHER" id="PTHR34793:SF1">
    <property type="entry name" value="PROTEIN THYLAKOID FORMATION 1, CHLOROPLASTIC"/>
    <property type="match status" value="1"/>
</dbReference>
<dbReference type="Pfam" id="PF11264">
    <property type="entry name" value="ThylakoidFormat"/>
    <property type="match status" value="1"/>
</dbReference>
<accession>B1XHY6</accession>
<organism>
    <name type="scientific">Picosynechococcus sp. (strain ATCC 27264 / PCC 7002 / PR-6)</name>
    <name type="common">Agmenellum quadruplicatum</name>
    <dbReference type="NCBI Taxonomy" id="32049"/>
    <lineage>
        <taxon>Bacteria</taxon>
        <taxon>Bacillati</taxon>
        <taxon>Cyanobacteriota</taxon>
        <taxon>Cyanophyceae</taxon>
        <taxon>Oscillatoriophycideae</taxon>
        <taxon>Chroococcales</taxon>
        <taxon>Geminocystaceae</taxon>
        <taxon>Picosynechococcus</taxon>
    </lineage>
</organism>
<protein>
    <recommendedName>
        <fullName evidence="1">Protein Thf1</fullName>
    </recommendedName>
</protein>
<name>THF1_PICP2</name>
<sequence length="254" mass="29083">MSQVRTVSDTKRDFYTHHTRPINSIFRRVVEELLVEMHLLSVNADFRYDPFYALGVVTSFERFMQGYRPEADKVSIFQSMCQAIGGDANRYKEDAMALVELAKRCSGTQLIECFRQDVPPEGAQELWEKIEAIAKNDHFKYSRLFAIGVYTFLGESEPQLLEDTEKRDEMLTTVTAGLNLPEEKMKKDLDLYRSNLEKMNQVLEVLEDALAVERQRREKAEAEAKAKTAEATVATETNDEQDEQKETSESGSDA</sequence>
<gene>
    <name evidence="1" type="primary">thf1</name>
    <name type="ordered locus">SYNPCC7002_A0732</name>
</gene>
<keyword id="KW-0175">Coiled coil</keyword>
<keyword id="KW-1185">Reference proteome</keyword>